<sequence>MLLVVGLGNPGKEYAAHRHNVGFMAIDALADEVRADPFREKFSGVHARAEIAGQQAILLKPMTYMNESGRSVQPAMAFFKVAPSELIVLHDELDLPFGTVRLKVGGGHAGHNGLRSIISHGGTGNFGRVRLGVGRPPAGFRGEVADYVLSGFDAVERASLPDCLKQAVQSVLEVAARGFEAAMNVRNTRPKPGKRQKGEGDGSTDPAPAAKEGKGPLPPTQKP</sequence>
<keyword id="KW-0963">Cytoplasm</keyword>
<keyword id="KW-0378">Hydrolase</keyword>
<keyword id="KW-1185">Reference proteome</keyword>
<keyword id="KW-0694">RNA-binding</keyword>
<keyword id="KW-0820">tRNA-binding</keyword>
<comment type="function">
    <text evidence="1">Hydrolyzes ribosome-free peptidyl-tRNAs (with 1 or more amino acids incorporated), which drop off the ribosome during protein synthesis, or as a result of ribosome stalling.</text>
</comment>
<comment type="function">
    <text evidence="1">Catalyzes the release of premature peptidyl moieties from peptidyl-tRNA molecules trapped in stalled 50S ribosomal subunits, and thus maintains levels of free tRNAs and 50S ribosomes.</text>
</comment>
<comment type="catalytic activity">
    <reaction evidence="1">
        <text>an N-acyl-L-alpha-aminoacyl-tRNA + H2O = an N-acyl-L-amino acid + a tRNA + H(+)</text>
        <dbReference type="Rhea" id="RHEA:54448"/>
        <dbReference type="Rhea" id="RHEA-COMP:10123"/>
        <dbReference type="Rhea" id="RHEA-COMP:13883"/>
        <dbReference type="ChEBI" id="CHEBI:15377"/>
        <dbReference type="ChEBI" id="CHEBI:15378"/>
        <dbReference type="ChEBI" id="CHEBI:59874"/>
        <dbReference type="ChEBI" id="CHEBI:78442"/>
        <dbReference type="ChEBI" id="CHEBI:138191"/>
        <dbReference type="EC" id="3.1.1.29"/>
    </reaction>
</comment>
<comment type="subunit">
    <text evidence="1">Monomer.</text>
</comment>
<comment type="subcellular location">
    <subcellularLocation>
        <location evidence="1">Cytoplasm</location>
    </subcellularLocation>
</comment>
<comment type="similarity">
    <text evidence="1">Belongs to the PTH family.</text>
</comment>
<accession>A9GXK1</accession>
<evidence type="ECO:0000255" key="1">
    <source>
        <dbReference type="HAMAP-Rule" id="MF_00083"/>
    </source>
</evidence>
<evidence type="ECO:0000256" key="2">
    <source>
        <dbReference type="SAM" id="MobiDB-lite"/>
    </source>
</evidence>
<feature type="chain" id="PRO_1000075358" description="Peptidyl-tRNA hydrolase">
    <location>
        <begin position="1"/>
        <end position="223"/>
    </location>
</feature>
<feature type="region of interest" description="Disordered" evidence="2">
    <location>
        <begin position="183"/>
        <end position="223"/>
    </location>
</feature>
<feature type="active site" description="Proton acceptor" evidence="1">
    <location>
        <position position="19"/>
    </location>
</feature>
<feature type="binding site" evidence="1">
    <location>
        <position position="14"/>
    </location>
    <ligand>
        <name>tRNA</name>
        <dbReference type="ChEBI" id="CHEBI:17843"/>
    </ligand>
</feature>
<feature type="binding site" evidence="1">
    <location>
        <position position="64"/>
    </location>
    <ligand>
        <name>tRNA</name>
        <dbReference type="ChEBI" id="CHEBI:17843"/>
    </ligand>
</feature>
<feature type="binding site" evidence="1">
    <location>
        <position position="66"/>
    </location>
    <ligand>
        <name>tRNA</name>
        <dbReference type="ChEBI" id="CHEBI:17843"/>
    </ligand>
</feature>
<feature type="binding site" evidence="1">
    <location>
        <position position="112"/>
    </location>
    <ligand>
        <name>tRNA</name>
        <dbReference type="ChEBI" id="CHEBI:17843"/>
    </ligand>
</feature>
<feature type="site" description="Discriminates between blocked and unblocked aminoacyl-tRNA" evidence="1">
    <location>
        <position position="9"/>
    </location>
</feature>
<feature type="site" description="Stabilizes the basic form of H active site to accept a proton" evidence="1">
    <location>
        <position position="91"/>
    </location>
</feature>
<proteinExistence type="inferred from homology"/>
<reference key="1">
    <citation type="journal article" date="2007" name="Nat. Biotechnol.">
        <title>Complete genome sequence of the myxobacterium Sorangium cellulosum.</title>
        <authorList>
            <person name="Schneiker S."/>
            <person name="Perlova O."/>
            <person name="Kaiser O."/>
            <person name="Gerth K."/>
            <person name="Alici A."/>
            <person name="Altmeyer M.O."/>
            <person name="Bartels D."/>
            <person name="Bekel T."/>
            <person name="Beyer S."/>
            <person name="Bode E."/>
            <person name="Bode H.B."/>
            <person name="Bolten C.J."/>
            <person name="Choudhuri J.V."/>
            <person name="Doss S."/>
            <person name="Elnakady Y.A."/>
            <person name="Frank B."/>
            <person name="Gaigalat L."/>
            <person name="Goesmann A."/>
            <person name="Groeger C."/>
            <person name="Gross F."/>
            <person name="Jelsbak L."/>
            <person name="Jelsbak L."/>
            <person name="Kalinowski J."/>
            <person name="Kegler C."/>
            <person name="Knauber T."/>
            <person name="Konietzny S."/>
            <person name="Kopp M."/>
            <person name="Krause L."/>
            <person name="Krug D."/>
            <person name="Linke B."/>
            <person name="Mahmud T."/>
            <person name="Martinez-Arias R."/>
            <person name="McHardy A.C."/>
            <person name="Merai M."/>
            <person name="Meyer F."/>
            <person name="Mormann S."/>
            <person name="Munoz-Dorado J."/>
            <person name="Perez J."/>
            <person name="Pradella S."/>
            <person name="Rachid S."/>
            <person name="Raddatz G."/>
            <person name="Rosenau F."/>
            <person name="Rueckert C."/>
            <person name="Sasse F."/>
            <person name="Scharfe M."/>
            <person name="Schuster S.C."/>
            <person name="Suen G."/>
            <person name="Treuner-Lange A."/>
            <person name="Velicer G.J."/>
            <person name="Vorholter F.-J."/>
            <person name="Weissman K.J."/>
            <person name="Welch R.D."/>
            <person name="Wenzel S.C."/>
            <person name="Whitworth D.E."/>
            <person name="Wilhelm S."/>
            <person name="Wittmann C."/>
            <person name="Bloecker H."/>
            <person name="Puehler A."/>
            <person name="Mueller R."/>
        </authorList>
    </citation>
    <scope>NUCLEOTIDE SEQUENCE [LARGE SCALE GENOMIC DNA]</scope>
    <source>
        <strain>So ce56</strain>
    </source>
</reference>
<organism>
    <name type="scientific">Sorangium cellulosum (strain So ce56)</name>
    <name type="common">Polyangium cellulosum (strain So ce56)</name>
    <dbReference type="NCBI Taxonomy" id="448385"/>
    <lineage>
        <taxon>Bacteria</taxon>
        <taxon>Pseudomonadati</taxon>
        <taxon>Myxococcota</taxon>
        <taxon>Polyangia</taxon>
        <taxon>Polyangiales</taxon>
        <taxon>Polyangiaceae</taxon>
        <taxon>Sorangium</taxon>
    </lineage>
</organism>
<protein>
    <recommendedName>
        <fullName evidence="1">Peptidyl-tRNA hydrolase</fullName>
        <shortName evidence="1">Pth</shortName>
        <ecNumber evidence="1">3.1.1.29</ecNumber>
    </recommendedName>
</protein>
<dbReference type="EC" id="3.1.1.29" evidence="1"/>
<dbReference type="EMBL" id="AM746676">
    <property type="protein sequence ID" value="CAN97105.1"/>
    <property type="molecule type" value="Genomic_DNA"/>
</dbReference>
<dbReference type="RefSeq" id="WP_012239544.1">
    <property type="nucleotide sequence ID" value="NC_010162.1"/>
</dbReference>
<dbReference type="SMR" id="A9GXK1"/>
<dbReference type="STRING" id="448385.sce6936"/>
<dbReference type="KEGG" id="scl:sce6936"/>
<dbReference type="eggNOG" id="COG0193">
    <property type="taxonomic scope" value="Bacteria"/>
</dbReference>
<dbReference type="HOGENOM" id="CLU_062456_4_1_7"/>
<dbReference type="OrthoDB" id="9800507at2"/>
<dbReference type="BioCyc" id="SCEL448385:SCE_RS35575-MONOMER"/>
<dbReference type="Proteomes" id="UP000002139">
    <property type="component" value="Chromosome"/>
</dbReference>
<dbReference type="GO" id="GO:0005737">
    <property type="term" value="C:cytoplasm"/>
    <property type="evidence" value="ECO:0007669"/>
    <property type="project" value="UniProtKB-SubCell"/>
</dbReference>
<dbReference type="GO" id="GO:0004045">
    <property type="term" value="F:peptidyl-tRNA hydrolase activity"/>
    <property type="evidence" value="ECO:0007669"/>
    <property type="project" value="UniProtKB-UniRule"/>
</dbReference>
<dbReference type="GO" id="GO:0000049">
    <property type="term" value="F:tRNA binding"/>
    <property type="evidence" value="ECO:0007669"/>
    <property type="project" value="UniProtKB-UniRule"/>
</dbReference>
<dbReference type="GO" id="GO:0006515">
    <property type="term" value="P:protein quality control for misfolded or incompletely synthesized proteins"/>
    <property type="evidence" value="ECO:0007669"/>
    <property type="project" value="UniProtKB-UniRule"/>
</dbReference>
<dbReference type="GO" id="GO:0072344">
    <property type="term" value="P:rescue of stalled ribosome"/>
    <property type="evidence" value="ECO:0007669"/>
    <property type="project" value="UniProtKB-UniRule"/>
</dbReference>
<dbReference type="CDD" id="cd00462">
    <property type="entry name" value="PTH"/>
    <property type="match status" value="1"/>
</dbReference>
<dbReference type="FunFam" id="3.40.50.1470:FF:000001">
    <property type="entry name" value="Peptidyl-tRNA hydrolase"/>
    <property type="match status" value="1"/>
</dbReference>
<dbReference type="Gene3D" id="3.40.50.1470">
    <property type="entry name" value="Peptidyl-tRNA hydrolase"/>
    <property type="match status" value="1"/>
</dbReference>
<dbReference type="HAMAP" id="MF_00083">
    <property type="entry name" value="Pept_tRNA_hydro_bact"/>
    <property type="match status" value="1"/>
</dbReference>
<dbReference type="InterPro" id="IPR001328">
    <property type="entry name" value="Pept_tRNA_hydro"/>
</dbReference>
<dbReference type="InterPro" id="IPR018171">
    <property type="entry name" value="Pept_tRNA_hydro_CS"/>
</dbReference>
<dbReference type="InterPro" id="IPR036416">
    <property type="entry name" value="Pept_tRNA_hydro_sf"/>
</dbReference>
<dbReference type="NCBIfam" id="TIGR00447">
    <property type="entry name" value="pth"/>
    <property type="match status" value="1"/>
</dbReference>
<dbReference type="PANTHER" id="PTHR17224">
    <property type="entry name" value="PEPTIDYL-TRNA HYDROLASE"/>
    <property type="match status" value="1"/>
</dbReference>
<dbReference type="PANTHER" id="PTHR17224:SF1">
    <property type="entry name" value="PEPTIDYL-TRNA HYDROLASE"/>
    <property type="match status" value="1"/>
</dbReference>
<dbReference type="Pfam" id="PF01195">
    <property type="entry name" value="Pept_tRNA_hydro"/>
    <property type="match status" value="1"/>
</dbReference>
<dbReference type="SUPFAM" id="SSF53178">
    <property type="entry name" value="Peptidyl-tRNA hydrolase-like"/>
    <property type="match status" value="1"/>
</dbReference>
<dbReference type="PROSITE" id="PS01196">
    <property type="entry name" value="PEPT_TRNA_HYDROL_2"/>
    <property type="match status" value="1"/>
</dbReference>
<name>PTH_SORC5</name>
<gene>
    <name evidence="1" type="primary">pth</name>
    <name type="ordered locus">sce6936</name>
</gene>